<organism>
    <name type="scientific">Cycas taitungensis</name>
    <name type="common">Prince sago</name>
    <name type="synonym">Cycas taiwaniana</name>
    <dbReference type="NCBI Taxonomy" id="54799"/>
    <lineage>
        <taxon>Eukaryota</taxon>
        <taxon>Viridiplantae</taxon>
        <taxon>Streptophyta</taxon>
        <taxon>Embryophyta</taxon>
        <taxon>Tracheophyta</taxon>
        <taxon>Spermatophyta</taxon>
        <taxon>Cycadidae</taxon>
        <taxon>Cycadales</taxon>
        <taxon>Cycadaceae</taxon>
        <taxon>Cycas</taxon>
    </lineage>
</organism>
<comment type="subcellular location">
    <subcellularLocation>
        <location>Plastid</location>
        <location>Chloroplast</location>
    </subcellularLocation>
</comment>
<comment type="similarity">
    <text evidence="1">Belongs to the universal ribosomal protein uS2 family.</text>
</comment>
<sequence>MTKRYWNINLEEMMEAGVHFGHQARKWNPRMAPYIFTERRGIHIINLTRTARFLSEACDLVFDAAGKGKQFPIVGTKYQAADSVASAAIKARCHYVNKKWLGGMLTNWSTTGTRPRKFKDLKKEQDTGQSNRLPKKEAAMLKRQLAQLQKYLGGIKYMTSLPDIVIIADQQEESTAIGECITLGIPTICLVDTDCDPDLTDIPIPANDDARASIRLILNKLTSSICEGHYSSMKGESMKS</sequence>
<feature type="chain" id="PRO_0000352109" description="Small ribosomal subunit protein uS2c">
    <location>
        <begin position="1"/>
        <end position="240"/>
    </location>
</feature>
<keyword id="KW-0150">Chloroplast</keyword>
<keyword id="KW-0934">Plastid</keyword>
<keyword id="KW-0687">Ribonucleoprotein</keyword>
<keyword id="KW-0689">Ribosomal protein</keyword>
<protein>
    <recommendedName>
        <fullName evidence="1">Small ribosomal subunit protein uS2c</fullName>
    </recommendedName>
    <alternativeName>
        <fullName>30S ribosomal protein S2, chloroplastic</fullName>
    </alternativeName>
</protein>
<evidence type="ECO:0000305" key="1"/>
<dbReference type="EMBL" id="AP009339">
    <property type="protein sequence ID" value="BAF64922.1"/>
    <property type="molecule type" value="Genomic_DNA"/>
</dbReference>
<dbReference type="RefSeq" id="YP_001312181.1">
    <property type="nucleotide sequence ID" value="NC_009618.1"/>
</dbReference>
<dbReference type="SMR" id="A6H5F6"/>
<dbReference type="GeneID" id="5309548"/>
<dbReference type="GO" id="GO:0009507">
    <property type="term" value="C:chloroplast"/>
    <property type="evidence" value="ECO:0007669"/>
    <property type="project" value="UniProtKB-SubCell"/>
</dbReference>
<dbReference type="GO" id="GO:0005763">
    <property type="term" value="C:mitochondrial small ribosomal subunit"/>
    <property type="evidence" value="ECO:0007669"/>
    <property type="project" value="TreeGrafter"/>
</dbReference>
<dbReference type="GO" id="GO:0003735">
    <property type="term" value="F:structural constituent of ribosome"/>
    <property type="evidence" value="ECO:0007669"/>
    <property type="project" value="InterPro"/>
</dbReference>
<dbReference type="GO" id="GO:0006412">
    <property type="term" value="P:translation"/>
    <property type="evidence" value="ECO:0007669"/>
    <property type="project" value="UniProtKB-UniRule"/>
</dbReference>
<dbReference type="CDD" id="cd01425">
    <property type="entry name" value="RPS2"/>
    <property type="match status" value="1"/>
</dbReference>
<dbReference type="FunFam" id="1.10.287.610:FF:000001">
    <property type="entry name" value="30S ribosomal protein S2"/>
    <property type="match status" value="1"/>
</dbReference>
<dbReference type="Gene3D" id="3.40.50.10490">
    <property type="entry name" value="Glucose-6-phosphate isomerase like protein, domain 1"/>
    <property type="match status" value="1"/>
</dbReference>
<dbReference type="Gene3D" id="1.10.287.610">
    <property type="entry name" value="Helix hairpin bin"/>
    <property type="match status" value="1"/>
</dbReference>
<dbReference type="HAMAP" id="MF_00291_B">
    <property type="entry name" value="Ribosomal_uS2_B"/>
    <property type="match status" value="1"/>
</dbReference>
<dbReference type="InterPro" id="IPR001865">
    <property type="entry name" value="Ribosomal_uS2"/>
</dbReference>
<dbReference type="InterPro" id="IPR005706">
    <property type="entry name" value="Ribosomal_uS2_bac/mit/plastid"/>
</dbReference>
<dbReference type="InterPro" id="IPR018130">
    <property type="entry name" value="Ribosomal_uS2_CS"/>
</dbReference>
<dbReference type="InterPro" id="IPR023591">
    <property type="entry name" value="Ribosomal_uS2_flav_dom_sf"/>
</dbReference>
<dbReference type="NCBIfam" id="TIGR01011">
    <property type="entry name" value="rpsB_bact"/>
    <property type="match status" value="1"/>
</dbReference>
<dbReference type="PANTHER" id="PTHR12534">
    <property type="entry name" value="30S RIBOSOMAL PROTEIN S2 PROKARYOTIC AND ORGANELLAR"/>
    <property type="match status" value="1"/>
</dbReference>
<dbReference type="PANTHER" id="PTHR12534:SF0">
    <property type="entry name" value="SMALL RIBOSOMAL SUBUNIT PROTEIN US2M"/>
    <property type="match status" value="1"/>
</dbReference>
<dbReference type="Pfam" id="PF00318">
    <property type="entry name" value="Ribosomal_S2"/>
    <property type="match status" value="1"/>
</dbReference>
<dbReference type="PRINTS" id="PR00395">
    <property type="entry name" value="RIBOSOMALS2"/>
</dbReference>
<dbReference type="SUPFAM" id="SSF52313">
    <property type="entry name" value="Ribosomal protein S2"/>
    <property type="match status" value="1"/>
</dbReference>
<dbReference type="PROSITE" id="PS00962">
    <property type="entry name" value="RIBOSOMAL_S2_1"/>
    <property type="match status" value="1"/>
</dbReference>
<dbReference type="PROSITE" id="PS00963">
    <property type="entry name" value="RIBOSOMAL_S2_2"/>
    <property type="match status" value="1"/>
</dbReference>
<geneLocation type="chloroplast"/>
<reference key="1">
    <citation type="journal article" date="2007" name="Mol. Biol. Evol.">
        <title>Chloroplast genome (cpDNA) of Cycas taitungensis and 56 cp protein-coding genes of Gnetum parvifolium: insights into cpDNA evolution and phylogeny of extant seed plants.</title>
        <authorList>
            <person name="Wu C.-S."/>
            <person name="Wang Y.-N."/>
            <person name="Liu S.-M."/>
            <person name="Chaw S.-M."/>
        </authorList>
    </citation>
    <scope>NUCLEOTIDE SEQUENCE [LARGE SCALE GENOMIC DNA]</scope>
</reference>
<proteinExistence type="inferred from homology"/>
<accession>A6H5F6</accession>
<gene>
    <name type="primary">rps2</name>
</gene>
<name>RR2_CYCTA</name>